<protein>
    <recommendedName>
        <fullName evidence="1">UDP-N-acetylmuramoylalanine--D-glutamate ligase</fullName>
        <ecNumber evidence="1">6.3.2.9</ecNumber>
    </recommendedName>
    <alternativeName>
        <fullName evidence="1">D-glutamic acid-adding enzyme</fullName>
    </alternativeName>
    <alternativeName>
        <fullName evidence="1">UDP-N-acetylmuramoyl-L-alanyl-D-glutamate synthetase</fullName>
    </alternativeName>
</protein>
<feature type="chain" id="PRO_1000061451" description="UDP-N-acetylmuramoylalanine--D-glutamate ligase">
    <location>
        <begin position="1"/>
        <end position="451"/>
    </location>
</feature>
<feature type="binding site" evidence="1">
    <location>
        <begin position="120"/>
        <end position="126"/>
    </location>
    <ligand>
        <name>ATP</name>
        <dbReference type="ChEBI" id="CHEBI:30616"/>
    </ligand>
</feature>
<proteinExistence type="inferred from homology"/>
<sequence>MNKMQMLKNEHVLVLGLAKSGYAAASILHEHGVNVTVNDQKPFEENEPAQLLSEKGIDVVCGSHPLRIFEDKDITILIKNPGIPYENVMVQEALRRQIPVWTEIELAYHLTSSPFIGITGSNGKTTTTTLIYEMLKKDSQKTLVAGNIGTVASEVAANADGDEWIVTELSSFQLMGTVEFRPKISLILNIFDAHLDYHHTREEYEKAKQKVFVHQHEDDIAVINLDDPSVVKLAEGSKAKKVFFSVKEPVEHGAFIQHGAIYYMNEHIIDVKDVVLPGEHNQENILAAICVVKNAGCSNDAIVHVLTTFGGVKHRLQFVDTIQSRKFYNDSKATNILATSKALSAFEQPTILLAGGLDRGNEFDELKPFMKHVKGMITFGETAPKFVKLGEELGIHHVKHVDNVEQAVPAAFNISEEEDVILLSPACASWDQHKTFEERGDMFVNAVHMLK</sequence>
<evidence type="ECO:0000255" key="1">
    <source>
        <dbReference type="HAMAP-Rule" id="MF_00639"/>
    </source>
</evidence>
<comment type="function">
    <text evidence="1">Cell wall formation. Catalyzes the addition of glutamate to the nucleotide precursor UDP-N-acetylmuramoyl-L-alanine (UMA).</text>
</comment>
<comment type="catalytic activity">
    <reaction evidence="1">
        <text>UDP-N-acetyl-alpha-D-muramoyl-L-alanine + D-glutamate + ATP = UDP-N-acetyl-alpha-D-muramoyl-L-alanyl-D-glutamate + ADP + phosphate + H(+)</text>
        <dbReference type="Rhea" id="RHEA:16429"/>
        <dbReference type="ChEBI" id="CHEBI:15378"/>
        <dbReference type="ChEBI" id="CHEBI:29986"/>
        <dbReference type="ChEBI" id="CHEBI:30616"/>
        <dbReference type="ChEBI" id="CHEBI:43474"/>
        <dbReference type="ChEBI" id="CHEBI:83898"/>
        <dbReference type="ChEBI" id="CHEBI:83900"/>
        <dbReference type="ChEBI" id="CHEBI:456216"/>
        <dbReference type="EC" id="6.3.2.9"/>
    </reaction>
</comment>
<comment type="pathway">
    <text evidence="1">Cell wall biogenesis; peptidoglycan biosynthesis.</text>
</comment>
<comment type="subcellular location">
    <subcellularLocation>
        <location evidence="1">Cytoplasm</location>
    </subcellularLocation>
</comment>
<comment type="similarity">
    <text evidence="1">Belongs to the MurCDEF family.</text>
</comment>
<organism>
    <name type="scientific">Bacillus pumilus (strain SAFR-032)</name>
    <dbReference type="NCBI Taxonomy" id="315750"/>
    <lineage>
        <taxon>Bacteria</taxon>
        <taxon>Bacillati</taxon>
        <taxon>Bacillota</taxon>
        <taxon>Bacilli</taxon>
        <taxon>Bacillales</taxon>
        <taxon>Bacillaceae</taxon>
        <taxon>Bacillus</taxon>
    </lineage>
</organism>
<accession>A8FCX9</accession>
<name>MURD_BACP2</name>
<reference key="1">
    <citation type="journal article" date="2007" name="PLoS ONE">
        <title>Paradoxical DNA repair and peroxide resistance gene conservation in Bacillus pumilus SAFR-032.</title>
        <authorList>
            <person name="Gioia J."/>
            <person name="Yerrapragada S."/>
            <person name="Qin X."/>
            <person name="Jiang H."/>
            <person name="Igboeli O.C."/>
            <person name="Muzny D."/>
            <person name="Dugan-Rocha S."/>
            <person name="Ding Y."/>
            <person name="Hawes A."/>
            <person name="Liu W."/>
            <person name="Perez L."/>
            <person name="Kovar C."/>
            <person name="Dinh H."/>
            <person name="Lee S."/>
            <person name="Nazareth L."/>
            <person name="Blyth P."/>
            <person name="Holder M."/>
            <person name="Buhay C."/>
            <person name="Tirumalai M.R."/>
            <person name="Liu Y."/>
            <person name="Dasgupta I."/>
            <person name="Bokhetache L."/>
            <person name="Fujita M."/>
            <person name="Karouia F."/>
            <person name="Eswara Moorthy P."/>
            <person name="Siefert J."/>
            <person name="Uzman A."/>
            <person name="Buzumbo P."/>
            <person name="Verma A."/>
            <person name="Zwiya H."/>
            <person name="McWilliams B.D."/>
            <person name="Olowu A."/>
            <person name="Clinkenbeard K.D."/>
            <person name="Newcombe D."/>
            <person name="Golebiewski L."/>
            <person name="Petrosino J.F."/>
            <person name="Nicholson W.L."/>
            <person name="Fox G.E."/>
            <person name="Venkateswaran K."/>
            <person name="Highlander S.K."/>
            <person name="Weinstock G.M."/>
        </authorList>
    </citation>
    <scope>NUCLEOTIDE SEQUENCE [LARGE SCALE GENOMIC DNA]</scope>
    <source>
        <strain>SAFR-032</strain>
    </source>
</reference>
<gene>
    <name evidence="1" type="primary">murD</name>
    <name type="ordered locus">BPUM_1413</name>
</gene>
<keyword id="KW-0067">ATP-binding</keyword>
<keyword id="KW-0131">Cell cycle</keyword>
<keyword id="KW-0132">Cell division</keyword>
<keyword id="KW-0133">Cell shape</keyword>
<keyword id="KW-0961">Cell wall biogenesis/degradation</keyword>
<keyword id="KW-0963">Cytoplasm</keyword>
<keyword id="KW-0436">Ligase</keyword>
<keyword id="KW-0547">Nucleotide-binding</keyword>
<keyword id="KW-0573">Peptidoglycan synthesis</keyword>
<dbReference type="EC" id="6.3.2.9" evidence="1"/>
<dbReference type="EMBL" id="CP000813">
    <property type="protein sequence ID" value="ABV62096.1"/>
    <property type="molecule type" value="Genomic_DNA"/>
</dbReference>
<dbReference type="RefSeq" id="WP_012009868.1">
    <property type="nucleotide sequence ID" value="NC_009848.4"/>
</dbReference>
<dbReference type="SMR" id="A8FCX9"/>
<dbReference type="STRING" id="315750.BPUM_1413"/>
<dbReference type="GeneID" id="5620676"/>
<dbReference type="KEGG" id="bpu:BPUM_1413"/>
<dbReference type="eggNOG" id="COG0771">
    <property type="taxonomic scope" value="Bacteria"/>
</dbReference>
<dbReference type="HOGENOM" id="CLU_032540_0_1_9"/>
<dbReference type="OrthoDB" id="9809796at2"/>
<dbReference type="UniPathway" id="UPA00219"/>
<dbReference type="Proteomes" id="UP000001355">
    <property type="component" value="Chromosome"/>
</dbReference>
<dbReference type="GO" id="GO:0005737">
    <property type="term" value="C:cytoplasm"/>
    <property type="evidence" value="ECO:0007669"/>
    <property type="project" value="UniProtKB-SubCell"/>
</dbReference>
<dbReference type="GO" id="GO:0005524">
    <property type="term" value="F:ATP binding"/>
    <property type="evidence" value="ECO:0007669"/>
    <property type="project" value="UniProtKB-UniRule"/>
</dbReference>
<dbReference type="GO" id="GO:0008764">
    <property type="term" value="F:UDP-N-acetylmuramoylalanine-D-glutamate ligase activity"/>
    <property type="evidence" value="ECO:0007669"/>
    <property type="project" value="UniProtKB-UniRule"/>
</dbReference>
<dbReference type="GO" id="GO:0051301">
    <property type="term" value="P:cell division"/>
    <property type="evidence" value="ECO:0007669"/>
    <property type="project" value="UniProtKB-KW"/>
</dbReference>
<dbReference type="GO" id="GO:0071555">
    <property type="term" value="P:cell wall organization"/>
    <property type="evidence" value="ECO:0007669"/>
    <property type="project" value="UniProtKB-KW"/>
</dbReference>
<dbReference type="GO" id="GO:0009252">
    <property type="term" value="P:peptidoglycan biosynthetic process"/>
    <property type="evidence" value="ECO:0007669"/>
    <property type="project" value="UniProtKB-UniRule"/>
</dbReference>
<dbReference type="GO" id="GO:0008360">
    <property type="term" value="P:regulation of cell shape"/>
    <property type="evidence" value="ECO:0007669"/>
    <property type="project" value="UniProtKB-KW"/>
</dbReference>
<dbReference type="Gene3D" id="3.90.190.20">
    <property type="entry name" value="Mur ligase, C-terminal domain"/>
    <property type="match status" value="1"/>
</dbReference>
<dbReference type="Gene3D" id="3.40.1190.10">
    <property type="entry name" value="Mur-like, catalytic domain"/>
    <property type="match status" value="1"/>
</dbReference>
<dbReference type="Gene3D" id="3.40.50.720">
    <property type="entry name" value="NAD(P)-binding Rossmann-like Domain"/>
    <property type="match status" value="1"/>
</dbReference>
<dbReference type="HAMAP" id="MF_00639">
    <property type="entry name" value="MurD"/>
    <property type="match status" value="1"/>
</dbReference>
<dbReference type="InterPro" id="IPR036565">
    <property type="entry name" value="Mur-like_cat_sf"/>
</dbReference>
<dbReference type="InterPro" id="IPR004101">
    <property type="entry name" value="Mur_ligase_C"/>
</dbReference>
<dbReference type="InterPro" id="IPR036615">
    <property type="entry name" value="Mur_ligase_C_dom_sf"/>
</dbReference>
<dbReference type="InterPro" id="IPR013221">
    <property type="entry name" value="Mur_ligase_cen"/>
</dbReference>
<dbReference type="InterPro" id="IPR005762">
    <property type="entry name" value="MurD"/>
</dbReference>
<dbReference type="NCBIfam" id="TIGR01087">
    <property type="entry name" value="murD"/>
    <property type="match status" value="1"/>
</dbReference>
<dbReference type="PANTHER" id="PTHR43692">
    <property type="entry name" value="UDP-N-ACETYLMURAMOYLALANINE--D-GLUTAMATE LIGASE"/>
    <property type="match status" value="1"/>
</dbReference>
<dbReference type="PANTHER" id="PTHR43692:SF1">
    <property type="entry name" value="UDP-N-ACETYLMURAMOYLALANINE--D-GLUTAMATE LIGASE"/>
    <property type="match status" value="1"/>
</dbReference>
<dbReference type="Pfam" id="PF02875">
    <property type="entry name" value="Mur_ligase_C"/>
    <property type="match status" value="1"/>
</dbReference>
<dbReference type="Pfam" id="PF08245">
    <property type="entry name" value="Mur_ligase_M"/>
    <property type="match status" value="1"/>
</dbReference>
<dbReference type="Pfam" id="PF21799">
    <property type="entry name" value="MurD-like_N"/>
    <property type="match status" value="1"/>
</dbReference>
<dbReference type="SUPFAM" id="SSF51984">
    <property type="entry name" value="MurCD N-terminal domain"/>
    <property type="match status" value="1"/>
</dbReference>
<dbReference type="SUPFAM" id="SSF53623">
    <property type="entry name" value="MurD-like peptide ligases, catalytic domain"/>
    <property type="match status" value="1"/>
</dbReference>
<dbReference type="SUPFAM" id="SSF53244">
    <property type="entry name" value="MurD-like peptide ligases, peptide-binding domain"/>
    <property type="match status" value="1"/>
</dbReference>